<comment type="function">
    <text evidence="4">Probable aminotransferase.</text>
</comment>
<comment type="cofactor">
    <cofactor evidence="1">
        <name>pyridoxal 5'-phosphate</name>
        <dbReference type="ChEBI" id="CHEBI:597326"/>
    </cofactor>
</comment>
<comment type="biotechnology">
    <text evidence="2">Was identified as a novel immunogenic protein with the potential to reduce the severity of M.bovis infection when used alone as a subunit vaccine.</text>
</comment>
<comment type="similarity">
    <text evidence="4">Belongs to the class-III pyridoxal-phosphate-dependent aminotransferase family.</text>
</comment>
<comment type="sequence caution" evidence="3">
    <conflict type="erroneous initiation">
        <sequence resource="EMBL-CDS" id="AFN51338"/>
    </conflict>
    <text>Truncated N-terminus.</text>
</comment>
<comment type="sequence caution" evidence="3">
    <conflict type="erroneous initiation">
        <sequence resource="EMBL-CDS" id="CCP46150"/>
    </conflict>
    <text>Truncated N-terminus.</text>
</comment>
<comment type="sequence caution" evidence="3">
    <conflict type="erroneous initiation">
        <sequence resource="EMBL-CDS" id="KBJ27814"/>
    </conflict>
    <text>Truncated N-terminus.</text>
</comment>
<sequence>MPRIRKPPSRSLPEPSAALANTTTRNLWLHFARHGAGIQHPVIVRGDGVTIFDDRGKSYLDALSGLFVVQVGYGRAELAEAAARQAGTLGYFPLWGYATPPAIELAERLARYAPGDLNRVFFTSGGTEAVETAWKVAKQYFKLTGKPGKQKVISRSIAYHGTTQGALAITGLPLFKAPFEPLTPGGFRVPNTNFYRAPLHTDLKEFGRWAADRIAEAIEFEGPDTVAAVFLEPVQNAGGCIPAPPGYFERVREICDRYDVLLVSDEVICAFGRIGSMFACEDLGYVPDMITCAKGLTSGYSPLGAMIASDRLFEPFNDGETMFAHGYTFGGHPVSAAVGLANLDIFEREGLSDHVKRNSPALRATLEKLYDLPIVGDIRGEGYFFGIELVKDQATKQTFTDDERARLLGQVSAALFEAGLYCRTDDRGDPVVQVAPPLISGQPEFDTIETILRSVLTDTGRKYLHL</sequence>
<accession>O53379</accession>
<accession>I6Y379</accession>
<accession>L0TFB0</accession>
<reference key="1">
    <citation type="journal article" date="1998" name="Nature">
        <title>Deciphering the biology of Mycobacterium tuberculosis from the complete genome sequence.</title>
        <authorList>
            <person name="Cole S.T."/>
            <person name="Brosch R."/>
            <person name="Parkhill J."/>
            <person name="Garnier T."/>
            <person name="Churcher C.M."/>
            <person name="Harris D.E."/>
            <person name="Gordon S.V."/>
            <person name="Eiglmeier K."/>
            <person name="Gas S."/>
            <person name="Barry C.E. III"/>
            <person name="Tekaia F."/>
            <person name="Badcock K."/>
            <person name="Basham D."/>
            <person name="Brown D."/>
            <person name="Chillingworth T."/>
            <person name="Connor R."/>
            <person name="Davies R.M."/>
            <person name="Devlin K."/>
            <person name="Feltwell T."/>
            <person name="Gentles S."/>
            <person name="Hamlin N."/>
            <person name="Holroyd S."/>
            <person name="Hornsby T."/>
            <person name="Jagels K."/>
            <person name="Krogh A."/>
            <person name="McLean J."/>
            <person name="Moule S."/>
            <person name="Murphy L.D."/>
            <person name="Oliver S."/>
            <person name="Osborne J."/>
            <person name="Quail M.A."/>
            <person name="Rajandream M.A."/>
            <person name="Rogers J."/>
            <person name="Rutter S."/>
            <person name="Seeger K."/>
            <person name="Skelton S."/>
            <person name="Squares S."/>
            <person name="Squares R."/>
            <person name="Sulston J.E."/>
            <person name="Taylor K."/>
            <person name="Whitehead S."/>
            <person name="Barrell B.G."/>
        </authorList>
    </citation>
    <scope>NUCLEOTIDE SEQUENCE [LARGE SCALE GENOMIC DNA]</scope>
    <source>
        <strain>ATCC 25618 / H37Rv</strain>
    </source>
</reference>
<reference key="2">
    <citation type="submission" date="2013-11" db="EMBL/GenBank/DDBJ databases">
        <title>The genome sequence of Mycobacterium tuberculosis H37Rv.</title>
        <authorList>
            <consortium name="The Broad Institute Genome Sequencing Platform"/>
            <person name="Galagan J."/>
            <person name="Kreiswirth B."/>
            <person name="Dobos K."/>
            <person name="Fortune S."/>
            <person name="Fitzgerald M."/>
            <person name="Young S.K."/>
            <person name="Zeng Q."/>
            <person name="Gargeya S."/>
            <person name="Abouelleil A."/>
            <person name="Alvarado L."/>
            <person name="Berlin A.M."/>
            <person name="Chapman S.B."/>
            <person name="Gainer-Dewar J."/>
            <person name="Goldberg J."/>
            <person name="Gnerre S."/>
            <person name="Griggs A."/>
            <person name="Gujja S."/>
            <person name="Hansen M."/>
            <person name="Howarth C."/>
            <person name="Imamovic A."/>
            <person name="Larimer J."/>
            <person name="McCowan C."/>
            <person name="Murphy C."/>
            <person name="Pearson M."/>
            <person name="Poon T."/>
            <person name="Priest M."/>
            <person name="Roberts A."/>
            <person name="Saif S."/>
            <person name="Shea T."/>
            <person name="Sykes S."/>
            <person name="Wortman J."/>
            <person name="Nusbaum C."/>
            <person name="Birren B."/>
        </authorList>
    </citation>
    <scope>NUCLEOTIDE SEQUENCE [LARGE SCALE GENOMIC DNA]</scope>
    <source>
        <strain>ATCC 25618 / H37Rv</strain>
    </source>
</reference>
<reference key="3">
    <citation type="submission" date="2014-04" db="EMBL/GenBank/DDBJ databases">
        <title>The genome sequence of Mycobacterium tuberculosis H37Rv.</title>
        <authorList>
            <consortium name="The Broad Institute Genomics Platform"/>
            <consortium name="The Broad Institute Genome Sequencing Center for Infectious Disease"/>
            <person name="Earl A.M."/>
            <person name="Kreiswirth B."/>
            <person name="Gomez J."/>
            <person name="Victor T."/>
            <person name="Desjardins C."/>
            <person name="Abeel T."/>
            <person name="Young S."/>
            <person name="Zeng Q."/>
            <person name="Gargeya S."/>
            <person name="Abouelleil A."/>
            <person name="Alvarado L."/>
            <person name="Chapman S.B."/>
            <person name="Gainer-Dewar J."/>
            <person name="Goldberg J."/>
            <person name="Griggs A."/>
            <person name="Gujja S."/>
            <person name="Hansen M."/>
            <person name="Howarth C."/>
            <person name="Imamovic A."/>
            <person name="Larimer J."/>
            <person name="Murphy C."/>
            <person name="Naylor J."/>
            <person name="Pearson M."/>
            <person name="Poon T.W."/>
            <person name="Priest M."/>
            <person name="Roberts A."/>
            <person name="Saif S."/>
            <person name="Shea T."/>
            <person name="Sykes S."/>
            <person name="Wortman J."/>
            <person name="Nusbaum C."/>
            <person name="Birren B."/>
        </authorList>
    </citation>
    <scope>NUCLEOTIDE SEQUENCE [LARGE SCALE GENOMIC DNA]</scope>
    <source>
        <strain>ATCC 25618 / H37Rv</strain>
    </source>
</reference>
<reference key="4">
    <citation type="journal article" date="2022" name="Genomics">
        <title>Deep N-terminomics of Mycobacterium tuberculosis H37Rv extensively correct annotated encoding genes.</title>
        <authorList>
            <person name="Shi J."/>
            <person name="Meng S."/>
            <person name="Wan L."/>
            <person name="Zhang Z."/>
            <person name="Jiang S."/>
            <person name="Zhu H."/>
            <person name="Dai E."/>
            <person name="Chang L."/>
            <person name="Gao H."/>
            <person name="Wan K."/>
            <person name="Zhang L."/>
            <person name="Zhao X."/>
            <person name="Liu H."/>
            <person name="Lyu Z."/>
            <person name="Zhang Y."/>
            <person name="Xu P."/>
        </authorList>
    </citation>
    <scope>PROTEIN SEQUENCE OF 11-25</scope>
    <scope>SEQUENCE REVISION TO N-TERMINUS</scope>
    <source>
        <strain>H37Rv</strain>
    </source>
</reference>
<reference key="5">
    <citation type="journal article" date="2011" name="Mol. Cell. Proteomics">
        <title>Proteogenomic analysis of Mycobacterium tuberculosis by high resolution mass spectrometry.</title>
        <authorList>
            <person name="Kelkar D.S."/>
            <person name="Kumar D."/>
            <person name="Kumar P."/>
            <person name="Balakrishnan L."/>
            <person name="Muthusamy B."/>
            <person name="Yadav A.K."/>
            <person name="Shrivastava P."/>
            <person name="Marimuthu A."/>
            <person name="Anand S."/>
            <person name="Sundaram H."/>
            <person name="Kingsbury R."/>
            <person name="Harsha H.C."/>
            <person name="Nair B."/>
            <person name="Prasad T.S."/>
            <person name="Chauhan D.S."/>
            <person name="Katoch K."/>
            <person name="Katoch V.M."/>
            <person name="Kumar P."/>
            <person name="Chaerkady R."/>
            <person name="Ramachandran S."/>
            <person name="Dash D."/>
            <person name="Pandey A."/>
        </authorList>
    </citation>
    <scope>IDENTIFICATION BY MASS SPECTROMETRY [LARGE SCALE ANALYSIS]</scope>
    <source>
        <strain>ATCC 25618 / H37Rv</strain>
    </source>
</reference>
<reference key="6">
    <citation type="journal article" date="2013" name="Clin. Vaccine Immunol.">
        <title>Development of an unbiased antigen-mining approach to identify novel vaccine antigens and diagnostic reagents for bovine tuberculosis.</title>
        <authorList>
            <person name="Jones G.J."/>
            <person name="Khatri B.L."/>
            <person name="Garcia-Pelayo M.C."/>
            <person name="Kaveh D.A."/>
            <person name="Bachy V.S."/>
            <person name="Hogarth P.J."/>
            <person name="Wooff E."/>
            <person name="Golby P."/>
            <person name="Vordermeier H.M."/>
        </authorList>
    </citation>
    <scope>BIOTECHNOLOGY</scope>
</reference>
<organism>
    <name type="scientific">Mycobacterium tuberculosis (strain ATCC 25618 / H37Rv)</name>
    <dbReference type="NCBI Taxonomy" id="83332"/>
    <lineage>
        <taxon>Bacteria</taxon>
        <taxon>Bacillati</taxon>
        <taxon>Actinomycetota</taxon>
        <taxon>Actinomycetes</taxon>
        <taxon>Mycobacteriales</taxon>
        <taxon>Mycobacteriaceae</taxon>
        <taxon>Mycobacterium</taxon>
        <taxon>Mycobacterium tuberculosis complex</taxon>
    </lineage>
</organism>
<name>Y3329_MYCTU</name>
<feature type="chain" id="PRO_0000432513" description="Probable aminotransferase Rv3329">
    <location>
        <begin position="1"/>
        <end position="466"/>
    </location>
</feature>
<feature type="modified residue" description="N6-(pyridoxal phosphate)lysine" evidence="1">
    <location>
        <position position="294"/>
    </location>
</feature>
<dbReference type="EC" id="2.6.1.-"/>
<dbReference type="EMBL" id="AL123456">
    <property type="protein sequence ID" value="CCP46150.1"/>
    <property type="status" value="ALT_INIT"/>
    <property type="molecule type" value="Genomic_DNA"/>
</dbReference>
<dbReference type="EMBL" id="CP003248">
    <property type="protein sequence ID" value="AFN51338.1"/>
    <property type="status" value="ALT_INIT"/>
    <property type="molecule type" value="Genomic_DNA"/>
</dbReference>
<dbReference type="EMBL" id="JLDD01000041">
    <property type="protein sequence ID" value="KBJ27814.1"/>
    <property type="status" value="ALT_INIT"/>
    <property type="molecule type" value="Genomic_DNA"/>
</dbReference>
<dbReference type="RefSeq" id="NP_217846.3">
    <property type="nucleotide sequence ID" value="NC_000962.3"/>
</dbReference>
<dbReference type="RefSeq" id="WP_003912180.1">
    <property type="nucleotide sequence ID" value="NC_000962.3"/>
</dbReference>
<dbReference type="SMR" id="O53379"/>
<dbReference type="FunCoup" id="O53379">
    <property type="interactions" value="233"/>
</dbReference>
<dbReference type="STRING" id="83332.Rv3329"/>
<dbReference type="PaxDb" id="83332-Rv3329"/>
<dbReference type="DNASU" id="888028"/>
<dbReference type="GeneID" id="888028"/>
<dbReference type="KEGG" id="mtu:Rv3329"/>
<dbReference type="KEGG" id="mtv:RVBD_3329"/>
<dbReference type="PATRIC" id="fig|83332.111.peg.3714"/>
<dbReference type="TubercuList" id="Rv3329"/>
<dbReference type="eggNOG" id="COG0161">
    <property type="taxonomic scope" value="Bacteria"/>
</dbReference>
<dbReference type="HOGENOM" id="CLU_016922_4_0_11"/>
<dbReference type="InParanoid" id="O53379"/>
<dbReference type="OrthoDB" id="9801834at2"/>
<dbReference type="Proteomes" id="UP000001584">
    <property type="component" value="Chromosome"/>
</dbReference>
<dbReference type="GO" id="GO:0004015">
    <property type="term" value="F:adenosylmethionine-8-amino-7-oxononanoate transaminase activity"/>
    <property type="evidence" value="ECO:0000318"/>
    <property type="project" value="GO_Central"/>
</dbReference>
<dbReference type="GO" id="GO:0030170">
    <property type="term" value="F:pyridoxal phosphate binding"/>
    <property type="evidence" value="ECO:0007669"/>
    <property type="project" value="InterPro"/>
</dbReference>
<dbReference type="GO" id="GO:0009102">
    <property type="term" value="P:biotin biosynthetic process"/>
    <property type="evidence" value="ECO:0000318"/>
    <property type="project" value="GO_Central"/>
</dbReference>
<dbReference type="CDD" id="cd00610">
    <property type="entry name" value="OAT_like"/>
    <property type="match status" value="1"/>
</dbReference>
<dbReference type="FunFam" id="3.40.640.10:FF:000014">
    <property type="entry name" value="Adenosylmethionine-8-amino-7-oxononanoate aminotransferase, probable"/>
    <property type="match status" value="1"/>
</dbReference>
<dbReference type="Gene3D" id="3.90.1150.10">
    <property type="entry name" value="Aspartate Aminotransferase, domain 1"/>
    <property type="match status" value="1"/>
</dbReference>
<dbReference type="Gene3D" id="3.40.640.10">
    <property type="entry name" value="Type I PLP-dependent aspartate aminotransferase-like (Major domain)"/>
    <property type="match status" value="1"/>
</dbReference>
<dbReference type="InterPro" id="IPR005814">
    <property type="entry name" value="Aminotrans_3"/>
</dbReference>
<dbReference type="InterPro" id="IPR049704">
    <property type="entry name" value="Aminotrans_3_PPA_site"/>
</dbReference>
<dbReference type="InterPro" id="IPR015424">
    <property type="entry name" value="PyrdxlP-dep_Trfase"/>
</dbReference>
<dbReference type="InterPro" id="IPR015421">
    <property type="entry name" value="PyrdxlP-dep_Trfase_major"/>
</dbReference>
<dbReference type="InterPro" id="IPR015422">
    <property type="entry name" value="PyrdxlP-dep_Trfase_small"/>
</dbReference>
<dbReference type="NCBIfam" id="NF005102">
    <property type="entry name" value="PRK06541.1"/>
    <property type="match status" value="1"/>
</dbReference>
<dbReference type="PANTHER" id="PTHR43094">
    <property type="entry name" value="AMINOTRANSFERASE"/>
    <property type="match status" value="1"/>
</dbReference>
<dbReference type="PANTHER" id="PTHR43094:SF1">
    <property type="entry name" value="AMINOTRANSFERASE CLASS-III"/>
    <property type="match status" value="1"/>
</dbReference>
<dbReference type="Pfam" id="PF00202">
    <property type="entry name" value="Aminotran_3"/>
    <property type="match status" value="1"/>
</dbReference>
<dbReference type="SUPFAM" id="SSF53383">
    <property type="entry name" value="PLP-dependent transferases"/>
    <property type="match status" value="1"/>
</dbReference>
<dbReference type="PROSITE" id="PS00600">
    <property type="entry name" value="AA_TRANSFER_CLASS_3"/>
    <property type="match status" value="1"/>
</dbReference>
<proteinExistence type="evidence at protein level"/>
<evidence type="ECO:0000250" key="1">
    <source>
        <dbReference type="UniProtKB" id="P53555"/>
    </source>
</evidence>
<evidence type="ECO:0000269" key="2">
    <source>
    </source>
</evidence>
<evidence type="ECO:0000269" key="3">
    <source>
    </source>
</evidence>
<evidence type="ECO:0000305" key="4"/>
<evidence type="ECO:0000312" key="5">
    <source>
        <dbReference type="EMBL" id="AFN51338.1"/>
    </source>
</evidence>
<evidence type="ECO:0000312" key="6">
    <source>
        <dbReference type="EMBL" id="CCP46150.1"/>
    </source>
</evidence>
<evidence type="ECO:0000312" key="7">
    <source>
        <dbReference type="EMBL" id="KBJ27814.1"/>
    </source>
</evidence>
<gene>
    <name evidence="6" type="ordered locus">Rv3329</name>
    <name evidence="5" type="ordered locus">RVBD_3329</name>
    <name evidence="7" type="ORF">P425_03469</name>
</gene>
<protein>
    <recommendedName>
        <fullName>Probable aminotransferase Rv3329</fullName>
        <ecNumber>2.6.1.-</ecNumber>
    </recommendedName>
</protein>
<keyword id="KW-0032">Aminotransferase</keyword>
<keyword id="KW-0903">Direct protein sequencing</keyword>
<keyword id="KW-0663">Pyridoxal phosphate</keyword>
<keyword id="KW-1185">Reference proteome</keyword>
<keyword id="KW-0808">Transferase</keyword>